<gene>
    <name evidence="1" type="primary">gpsA</name>
    <name type="ordered locus">Francci3_3614</name>
</gene>
<proteinExistence type="inferred from homology"/>
<protein>
    <recommendedName>
        <fullName evidence="1">Glycerol-3-phosphate dehydrogenase [NAD(P)+]</fullName>
        <ecNumber evidence="1">1.1.1.94</ecNumber>
    </recommendedName>
    <alternativeName>
        <fullName evidence="1">NAD(P)(+)-dependent glycerol-3-phosphate dehydrogenase</fullName>
    </alternativeName>
    <alternativeName>
        <fullName evidence="1">NAD(P)H-dependent dihydroxyacetone-phosphate reductase</fullName>
    </alternativeName>
</protein>
<reference key="1">
    <citation type="journal article" date="2007" name="Genome Res.">
        <title>Genome characteristics of facultatively symbiotic Frankia sp. strains reflect host range and host plant biogeography.</title>
        <authorList>
            <person name="Normand P."/>
            <person name="Lapierre P."/>
            <person name="Tisa L.S."/>
            <person name="Gogarten J.P."/>
            <person name="Alloisio N."/>
            <person name="Bagnarol E."/>
            <person name="Bassi C.A."/>
            <person name="Berry A.M."/>
            <person name="Bickhart D.M."/>
            <person name="Choisne N."/>
            <person name="Couloux A."/>
            <person name="Cournoyer B."/>
            <person name="Cruveiller S."/>
            <person name="Daubin V."/>
            <person name="Demange N."/>
            <person name="Francino M.P."/>
            <person name="Goltsman E."/>
            <person name="Huang Y."/>
            <person name="Kopp O.R."/>
            <person name="Labarre L."/>
            <person name="Lapidus A."/>
            <person name="Lavire C."/>
            <person name="Marechal J."/>
            <person name="Martinez M."/>
            <person name="Mastronunzio J.E."/>
            <person name="Mullin B.C."/>
            <person name="Niemann J."/>
            <person name="Pujic P."/>
            <person name="Rawnsley T."/>
            <person name="Rouy Z."/>
            <person name="Schenowitz C."/>
            <person name="Sellstedt A."/>
            <person name="Tavares F."/>
            <person name="Tomkins J.P."/>
            <person name="Vallenet D."/>
            <person name="Valverde C."/>
            <person name="Wall L.G."/>
            <person name="Wang Y."/>
            <person name="Medigue C."/>
            <person name="Benson D.R."/>
        </authorList>
    </citation>
    <scope>NUCLEOTIDE SEQUENCE [LARGE SCALE GENOMIC DNA]</scope>
    <source>
        <strain>DSM 45818 / CECT 9043 / HFP020203 / CcI3</strain>
    </source>
</reference>
<organism>
    <name type="scientific">Frankia casuarinae (strain DSM 45818 / CECT 9043 / HFP020203 / CcI3)</name>
    <dbReference type="NCBI Taxonomy" id="106370"/>
    <lineage>
        <taxon>Bacteria</taxon>
        <taxon>Bacillati</taxon>
        <taxon>Actinomycetota</taxon>
        <taxon>Actinomycetes</taxon>
        <taxon>Frankiales</taxon>
        <taxon>Frankiaceae</taxon>
        <taxon>Frankia</taxon>
    </lineage>
</organism>
<keyword id="KW-0963">Cytoplasm</keyword>
<keyword id="KW-0444">Lipid biosynthesis</keyword>
<keyword id="KW-0443">Lipid metabolism</keyword>
<keyword id="KW-0520">NAD</keyword>
<keyword id="KW-0521">NADP</keyword>
<keyword id="KW-0547">Nucleotide-binding</keyword>
<keyword id="KW-0560">Oxidoreductase</keyword>
<keyword id="KW-0594">Phospholipid biosynthesis</keyword>
<keyword id="KW-1208">Phospholipid metabolism</keyword>
<keyword id="KW-1185">Reference proteome</keyword>
<dbReference type="EC" id="1.1.1.94" evidence="1"/>
<dbReference type="EMBL" id="CP000249">
    <property type="protein sequence ID" value="ABD12966.1"/>
    <property type="molecule type" value="Genomic_DNA"/>
</dbReference>
<dbReference type="SMR" id="Q2J6X6"/>
<dbReference type="STRING" id="106370.Francci3_3614"/>
<dbReference type="KEGG" id="fra:Francci3_3614"/>
<dbReference type="eggNOG" id="COG0240">
    <property type="taxonomic scope" value="Bacteria"/>
</dbReference>
<dbReference type="HOGENOM" id="CLU_033449_0_2_11"/>
<dbReference type="PhylomeDB" id="Q2J6X6"/>
<dbReference type="UniPathway" id="UPA00940"/>
<dbReference type="Proteomes" id="UP000001937">
    <property type="component" value="Chromosome"/>
</dbReference>
<dbReference type="GO" id="GO:0005829">
    <property type="term" value="C:cytosol"/>
    <property type="evidence" value="ECO:0007669"/>
    <property type="project" value="TreeGrafter"/>
</dbReference>
<dbReference type="GO" id="GO:0047952">
    <property type="term" value="F:glycerol-3-phosphate dehydrogenase [NAD(P)+] activity"/>
    <property type="evidence" value="ECO:0007669"/>
    <property type="project" value="UniProtKB-UniRule"/>
</dbReference>
<dbReference type="GO" id="GO:0051287">
    <property type="term" value="F:NAD binding"/>
    <property type="evidence" value="ECO:0007669"/>
    <property type="project" value="InterPro"/>
</dbReference>
<dbReference type="GO" id="GO:0005975">
    <property type="term" value="P:carbohydrate metabolic process"/>
    <property type="evidence" value="ECO:0007669"/>
    <property type="project" value="InterPro"/>
</dbReference>
<dbReference type="GO" id="GO:0046167">
    <property type="term" value="P:glycerol-3-phosphate biosynthetic process"/>
    <property type="evidence" value="ECO:0007669"/>
    <property type="project" value="UniProtKB-UniRule"/>
</dbReference>
<dbReference type="GO" id="GO:0046168">
    <property type="term" value="P:glycerol-3-phosphate catabolic process"/>
    <property type="evidence" value="ECO:0007669"/>
    <property type="project" value="InterPro"/>
</dbReference>
<dbReference type="GO" id="GO:0006650">
    <property type="term" value="P:glycerophospholipid metabolic process"/>
    <property type="evidence" value="ECO:0007669"/>
    <property type="project" value="UniProtKB-UniRule"/>
</dbReference>
<dbReference type="GO" id="GO:0008654">
    <property type="term" value="P:phospholipid biosynthetic process"/>
    <property type="evidence" value="ECO:0007669"/>
    <property type="project" value="UniProtKB-KW"/>
</dbReference>
<dbReference type="FunFam" id="1.10.1040.10:FF:000001">
    <property type="entry name" value="Glycerol-3-phosphate dehydrogenase [NAD(P)+]"/>
    <property type="match status" value="1"/>
</dbReference>
<dbReference type="FunFam" id="3.40.50.720:FF:000019">
    <property type="entry name" value="Glycerol-3-phosphate dehydrogenase [NAD(P)+]"/>
    <property type="match status" value="1"/>
</dbReference>
<dbReference type="Gene3D" id="1.10.1040.10">
    <property type="entry name" value="N-(1-d-carboxylethyl)-l-norvaline Dehydrogenase, domain 2"/>
    <property type="match status" value="1"/>
</dbReference>
<dbReference type="Gene3D" id="3.40.50.720">
    <property type="entry name" value="NAD(P)-binding Rossmann-like Domain"/>
    <property type="match status" value="1"/>
</dbReference>
<dbReference type="HAMAP" id="MF_00394">
    <property type="entry name" value="NAD_Glyc3P_dehydrog"/>
    <property type="match status" value="1"/>
</dbReference>
<dbReference type="InterPro" id="IPR008927">
    <property type="entry name" value="6-PGluconate_DH-like_C_sf"/>
</dbReference>
<dbReference type="InterPro" id="IPR013328">
    <property type="entry name" value="6PGD_dom2"/>
</dbReference>
<dbReference type="InterPro" id="IPR006168">
    <property type="entry name" value="G3P_DH_NAD-dep"/>
</dbReference>
<dbReference type="InterPro" id="IPR006109">
    <property type="entry name" value="G3P_DH_NAD-dep_C"/>
</dbReference>
<dbReference type="InterPro" id="IPR011128">
    <property type="entry name" value="G3P_DH_NAD-dep_N"/>
</dbReference>
<dbReference type="InterPro" id="IPR036291">
    <property type="entry name" value="NAD(P)-bd_dom_sf"/>
</dbReference>
<dbReference type="NCBIfam" id="NF000940">
    <property type="entry name" value="PRK00094.1-2"/>
    <property type="match status" value="1"/>
</dbReference>
<dbReference type="NCBIfam" id="NF000942">
    <property type="entry name" value="PRK00094.1-4"/>
    <property type="match status" value="1"/>
</dbReference>
<dbReference type="PANTHER" id="PTHR11728">
    <property type="entry name" value="GLYCEROL-3-PHOSPHATE DEHYDROGENASE"/>
    <property type="match status" value="1"/>
</dbReference>
<dbReference type="PANTHER" id="PTHR11728:SF1">
    <property type="entry name" value="GLYCEROL-3-PHOSPHATE DEHYDROGENASE [NAD(+)] 2, CHLOROPLASTIC"/>
    <property type="match status" value="1"/>
</dbReference>
<dbReference type="Pfam" id="PF07479">
    <property type="entry name" value="NAD_Gly3P_dh_C"/>
    <property type="match status" value="1"/>
</dbReference>
<dbReference type="Pfam" id="PF01210">
    <property type="entry name" value="NAD_Gly3P_dh_N"/>
    <property type="match status" value="1"/>
</dbReference>
<dbReference type="PIRSF" id="PIRSF000114">
    <property type="entry name" value="Glycerol-3-P_dh"/>
    <property type="match status" value="1"/>
</dbReference>
<dbReference type="PRINTS" id="PR00077">
    <property type="entry name" value="GPDHDRGNASE"/>
</dbReference>
<dbReference type="SUPFAM" id="SSF48179">
    <property type="entry name" value="6-phosphogluconate dehydrogenase C-terminal domain-like"/>
    <property type="match status" value="1"/>
</dbReference>
<dbReference type="SUPFAM" id="SSF51735">
    <property type="entry name" value="NAD(P)-binding Rossmann-fold domains"/>
    <property type="match status" value="1"/>
</dbReference>
<dbReference type="PROSITE" id="PS00957">
    <property type="entry name" value="NAD_G3PDH"/>
    <property type="match status" value="1"/>
</dbReference>
<comment type="function">
    <text evidence="1">Catalyzes the reduction of the glycolytic intermediate dihydroxyacetone phosphate (DHAP) to sn-glycerol 3-phosphate (G3P), the key precursor for phospholipid synthesis.</text>
</comment>
<comment type="catalytic activity">
    <reaction evidence="1">
        <text>sn-glycerol 3-phosphate + NAD(+) = dihydroxyacetone phosphate + NADH + H(+)</text>
        <dbReference type="Rhea" id="RHEA:11092"/>
        <dbReference type="ChEBI" id="CHEBI:15378"/>
        <dbReference type="ChEBI" id="CHEBI:57540"/>
        <dbReference type="ChEBI" id="CHEBI:57597"/>
        <dbReference type="ChEBI" id="CHEBI:57642"/>
        <dbReference type="ChEBI" id="CHEBI:57945"/>
        <dbReference type="EC" id="1.1.1.94"/>
    </reaction>
    <physiologicalReaction direction="right-to-left" evidence="1">
        <dbReference type="Rhea" id="RHEA:11094"/>
    </physiologicalReaction>
</comment>
<comment type="catalytic activity">
    <reaction evidence="1">
        <text>sn-glycerol 3-phosphate + NADP(+) = dihydroxyacetone phosphate + NADPH + H(+)</text>
        <dbReference type="Rhea" id="RHEA:11096"/>
        <dbReference type="ChEBI" id="CHEBI:15378"/>
        <dbReference type="ChEBI" id="CHEBI:57597"/>
        <dbReference type="ChEBI" id="CHEBI:57642"/>
        <dbReference type="ChEBI" id="CHEBI:57783"/>
        <dbReference type="ChEBI" id="CHEBI:58349"/>
        <dbReference type="EC" id="1.1.1.94"/>
    </reaction>
    <physiologicalReaction direction="right-to-left" evidence="1">
        <dbReference type="Rhea" id="RHEA:11098"/>
    </physiologicalReaction>
</comment>
<comment type="pathway">
    <text evidence="1">Membrane lipid metabolism; glycerophospholipid metabolism.</text>
</comment>
<comment type="subcellular location">
    <subcellularLocation>
        <location evidence="1">Cytoplasm</location>
    </subcellularLocation>
</comment>
<comment type="similarity">
    <text evidence="1">Belongs to the NAD-dependent glycerol-3-phosphate dehydrogenase family.</text>
</comment>
<evidence type="ECO:0000255" key="1">
    <source>
        <dbReference type="HAMAP-Rule" id="MF_00394"/>
    </source>
</evidence>
<sequence>MRRAAVLTAGSWGSVFAKVLADAGARVNLVARDPEIVRAVNTRQVNPRYLPAIQLPDRVRAMSDAGEALAGAEFVVLAVPSQALRSVLAGWAPLIGPDAVYVSLMKGVEVGSQLRMSEVITQVTGVSPDRIAVVSGPNLAPEIAAEQPAATVVASTSTSTAEAVQAACWTPYFRPYTNTDVIGCELGGAIKNVIALAAGMLEGMGFGTNSLASLMTRGLAETLRLGVALGADPMTFAGLAGLGDLVATCGSPLSRNRTFGEKLGRGLTLAQVEAEQQQVAEGVRSCRPLLAMADDLGVAMPITRQVERVLYEGLPPMEAVKDLMSREPGPEYRLRP</sequence>
<feature type="chain" id="PRO_0000255315" description="Glycerol-3-phosphate dehydrogenase [NAD(P)+]">
    <location>
        <begin position="1"/>
        <end position="336"/>
    </location>
</feature>
<feature type="active site" description="Proton acceptor" evidence="1">
    <location>
        <position position="191"/>
    </location>
</feature>
<feature type="binding site" evidence="1">
    <location>
        <position position="11"/>
    </location>
    <ligand>
        <name>NADPH</name>
        <dbReference type="ChEBI" id="CHEBI:57783"/>
    </ligand>
</feature>
<feature type="binding site" evidence="1">
    <location>
        <position position="12"/>
    </location>
    <ligand>
        <name>NADPH</name>
        <dbReference type="ChEBI" id="CHEBI:57783"/>
    </ligand>
</feature>
<feature type="binding site" evidence="1">
    <location>
        <position position="32"/>
    </location>
    <ligand>
        <name>NADPH</name>
        <dbReference type="ChEBI" id="CHEBI:57783"/>
    </ligand>
</feature>
<feature type="binding site" evidence="1">
    <location>
        <position position="106"/>
    </location>
    <ligand>
        <name>NADPH</name>
        <dbReference type="ChEBI" id="CHEBI:57783"/>
    </ligand>
</feature>
<feature type="binding site" evidence="1">
    <location>
        <position position="106"/>
    </location>
    <ligand>
        <name>sn-glycerol 3-phosphate</name>
        <dbReference type="ChEBI" id="CHEBI:57597"/>
    </ligand>
</feature>
<feature type="binding site" evidence="1">
    <location>
        <position position="136"/>
    </location>
    <ligand>
        <name>sn-glycerol 3-phosphate</name>
        <dbReference type="ChEBI" id="CHEBI:57597"/>
    </ligand>
</feature>
<feature type="binding site" evidence="1">
    <location>
        <position position="140"/>
    </location>
    <ligand>
        <name>NADPH</name>
        <dbReference type="ChEBI" id="CHEBI:57783"/>
    </ligand>
</feature>
<feature type="binding site" evidence="1">
    <location>
        <position position="191"/>
    </location>
    <ligand>
        <name>sn-glycerol 3-phosphate</name>
        <dbReference type="ChEBI" id="CHEBI:57597"/>
    </ligand>
</feature>
<feature type="binding site" evidence="1">
    <location>
        <position position="244"/>
    </location>
    <ligand>
        <name>sn-glycerol 3-phosphate</name>
        <dbReference type="ChEBI" id="CHEBI:57597"/>
    </ligand>
</feature>
<feature type="binding site" evidence="1">
    <location>
        <position position="254"/>
    </location>
    <ligand>
        <name>sn-glycerol 3-phosphate</name>
        <dbReference type="ChEBI" id="CHEBI:57597"/>
    </ligand>
</feature>
<feature type="binding site" evidence="1">
    <location>
        <position position="255"/>
    </location>
    <ligand>
        <name>NADPH</name>
        <dbReference type="ChEBI" id="CHEBI:57783"/>
    </ligand>
</feature>
<feature type="binding site" evidence="1">
    <location>
        <position position="255"/>
    </location>
    <ligand>
        <name>sn-glycerol 3-phosphate</name>
        <dbReference type="ChEBI" id="CHEBI:57597"/>
    </ligand>
</feature>
<feature type="binding site" evidence="1">
    <location>
        <position position="256"/>
    </location>
    <ligand>
        <name>sn-glycerol 3-phosphate</name>
        <dbReference type="ChEBI" id="CHEBI:57597"/>
    </ligand>
</feature>
<feature type="binding site" evidence="1">
    <location>
        <position position="279"/>
    </location>
    <ligand>
        <name>NADPH</name>
        <dbReference type="ChEBI" id="CHEBI:57783"/>
    </ligand>
</feature>
<feature type="binding site" evidence="1">
    <location>
        <position position="281"/>
    </location>
    <ligand>
        <name>NADPH</name>
        <dbReference type="ChEBI" id="CHEBI:57783"/>
    </ligand>
</feature>
<accession>Q2J6X6</accession>
<name>GPDA_FRACC</name>